<evidence type="ECO:0000255" key="1">
    <source>
        <dbReference type="HAMAP-Rule" id="MF_00454"/>
    </source>
</evidence>
<accession>B6YRY9</accession>
<organism>
    <name type="scientific">Azobacteroides pseudotrichonymphae genomovar. CFP2</name>
    <dbReference type="NCBI Taxonomy" id="511995"/>
    <lineage>
        <taxon>Bacteria</taxon>
        <taxon>Pseudomonadati</taxon>
        <taxon>Bacteroidota</taxon>
        <taxon>Bacteroidia</taxon>
        <taxon>Bacteroidales</taxon>
        <taxon>Candidatus Azobacteroides</taxon>
    </lineage>
</organism>
<gene>
    <name evidence="1" type="primary">fluC</name>
    <name evidence="1" type="synonym">crcB</name>
    <name type="ordered locus">CFPG_698</name>
</gene>
<keyword id="KW-0997">Cell inner membrane</keyword>
<keyword id="KW-1003">Cell membrane</keyword>
<keyword id="KW-0407">Ion channel</keyword>
<keyword id="KW-0406">Ion transport</keyword>
<keyword id="KW-0472">Membrane</keyword>
<keyword id="KW-0479">Metal-binding</keyword>
<keyword id="KW-1185">Reference proteome</keyword>
<keyword id="KW-0915">Sodium</keyword>
<keyword id="KW-0812">Transmembrane</keyword>
<keyword id="KW-1133">Transmembrane helix</keyword>
<keyword id="KW-0813">Transport</keyword>
<dbReference type="EMBL" id="AP010656">
    <property type="protein sequence ID" value="BAG83961.1"/>
    <property type="molecule type" value="Genomic_DNA"/>
</dbReference>
<dbReference type="RefSeq" id="WP_012573720.1">
    <property type="nucleotide sequence ID" value="NC_011565.1"/>
</dbReference>
<dbReference type="SMR" id="B6YRY9"/>
<dbReference type="KEGG" id="aps:CFPG_698"/>
<dbReference type="eggNOG" id="COG0239">
    <property type="taxonomic scope" value="Bacteria"/>
</dbReference>
<dbReference type="HOGENOM" id="CLU_114342_1_2_10"/>
<dbReference type="OrthoDB" id="9815830at2"/>
<dbReference type="Proteomes" id="UP000000723">
    <property type="component" value="Chromosome"/>
</dbReference>
<dbReference type="GO" id="GO:0005886">
    <property type="term" value="C:plasma membrane"/>
    <property type="evidence" value="ECO:0007669"/>
    <property type="project" value="UniProtKB-SubCell"/>
</dbReference>
<dbReference type="GO" id="GO:0062054">
    <property type="term" value="F:fluoride channel activity"/>
    <property type="evidence" value="ECO:0007669"/>
    <property type="project" value="UniProtKB-UniRule"/>
</dbReference>
<dbReference type="GO" id="GO:0046872">
    <property type="term" value="F:metal ion binding"/>
    <property type="evidence" value="ECO:0007669"/>
    <property type="project" value="UniProtKB-KW"/>
</dbReference>
<dbReference type="GO" id="GO:0140114">
    <property type="term" value="P:cellular detoxification of fluoride"/>
    <property type="evidence" value="ECO:0007669"/>
    <property type="project" value="UniProtKB-UniRule"/>
</dbReference>
<dbReference type="HAMAP" id="MF_00454">
    <property type="entry name" value="FluC"/>
    <property type="match status" value="1"/>
</dbReference>
<dbReference type="InterPro" id="IPR003691">
    <property type="entry name" value="FluC"/>
</dbReference>
<dbReference type="NCBIfam" id="TIGR00494">
    <property type="entry name" value="crcB"/>
    <property type="match status" value="1"/>
</dbReference>
<dbReference type="PANTHER" id="PTHR28259">
    <property type="entry name" value="FLUORIDE EXPORT PROTEIN 1-RELATED"/>
    <property type="match status" value="1"/>
</dbReference>
<dbReference type="PANTHER" id="PTHR28259:SF1">
    <property type="entry name" value="FLUORIDE EXPORT PROTEIN 1-RELATED"/>
    <property type="match status" value="1"/>
</dbReference>
<dbReference type="Pfam" id="PF02537">
    <property type="entry name" value="CRCB"/>
    <property type="match status" value="1"/>
</dbReference>
<protein>
    <recommendedName>
        <fullName evidence="1">Fluoride-specific ion channel FluC</fullName>
    </recommendedName>
</protein>
<proteinExistence type="inferred from homology"/>
<sequence length="125" mass="13863">MLKKIFLVGIGGGIGSVLRFVVSLLIVRIRFSIFPLTTFVVNLLGCFFVGILVGLSLKNNWLDENVKIFFITGFCGGFTTFSSFSLENFQLYQAGNYHTLVLYILINIIAGCAAVLLGYILTEFF</sequence>
<reference key="1">
    <citation type="journal article" date="2008" name="Science">
        <title>Genome of an endosymbiont coupling N2 fixation to cellulolysis within RT protist cells in termite gut.</title>
        <authorList>
            <person name="Hongoh Y."/>
            <person name="Sharma V.K."/>
            <person name="Prakash T."/>
            <person name="Noda S."/>
            <person name="Toh H."/>
            <person name="Taylor T.D."/>
            <person name="Kudo T."/>
            <person name="Sakaki Y."/>
            <person name="Toyoda A."/>
            <person name="Hattori M."/>
            <person name="Ohkuma M."/>
        </authorList>
    </citation>
    <scope>NUCLEOTIDE SEQUENCE [LARGE SCALE GENOMIC DNA]</scope>
</reference>
<feature type="chain" id="PRO_1000206243" description="Fluoride-specific ion channel FluC">
    <location>
        <begin position="1"/>
        <end position="125"/>
    </location>
</feature>
<feature type="transmembrane region" description="Helical" evidence="1">
    <location>
        <begin position="5"/>
        <end position="25"/>
    </location>
</feature>
<feature type="transmembrane region" description="Helical" evidence="1">
    <location>
        <begin position="33"/>
        <end position="53"/>
    </location>
</feature>
<feature type="transmembrane region" description="Helical" evidence="1">
    <location>
        <begin position="66"/>
        <end position="86"/>
    </location>
</feature>
<feature type="transmembrane region" description="Helical" evidence="1">
    <location>
        <begin position="100"/>
        <end position="120"/>
    </location>
</feature>
<feature type="binding site" evidence="1">
    <location>
        <position position="76"/>
    </location>
    <ligand>
        <name>Na(+)</name>
        <dbReference type="ChEBI" id="CHEBI:29101"/>
        <note>structural</note>
    </ligand>
</feature>
<feature type="binding site" evidence="1">
    <location>
        <position position="79"/>
    </location>
    <ligand>
        <name>Na(+)</name>
        <dbReference type="ChEBI" id="CHEBI:29101"/>
        <note>structural</note>
    </ligand>
</feature>
<name>FLUC_AZOPC</name>
<comment type="function">
    <text evidence="1">Fluoride-specific ion channel. Important for reducing fluoride concentration in the cell, thus reducing its toxicity.</text>
</comment>
<comment type="catalytic activity">
    <reaction evidence="1">
        <text>fluoride(in) = fluoride(out)</text>
        <dbReference type="Rhea" id="RHEA:76159"/>
        <dbReference type="ChEBI" id="CHEBI:17051"/>
    </reaction>
    <physiologicalReaction direction="left-to-right" evidence="1">
        <dbReference type="Rhea" id="RHEA:76160"/>
    </physiologicalReaction>
</comment>
<comment type="activity regulation">
    <text evidence="1">Na(+) is not transported, but it plays an essential structural role and its presence is essential for fluoride channel function.</text>
</comment>
<comment type="subcellular location">
    <subcellularLocation>
        <location evidence="1">Cell inner membrane</location>
        <topology evidence="1">Multi-pass membrane protein</topology>
    </subcellularLocation>
</comment>
<comment type="similarity">
    <text evidence="1">Belongs to the fluoride channel Fluc/FEX (TC 1.A.43) family.</text>
</comment>